<organism>
    <name type="scientific">Clostridium novyi (strain NT)</name>
    <dbReference type="NCBI Taxonomy" id="386415"/>
    <lineage>
        <taxon>Bacteria</taxon>
        <taxon>Bacillati</taxon>
        <taxon>Bacillota</taxon>
        <taxon>Clostridia</taxon>
        <taxon>Eubacteriales</taxon>
        <taxon>Clostridiaceae</taxon>
        <taxon>Clostridium</taxon>
    </lineage>
</organism>
<accession>A0Q210</accession>
<gene>
    <name evidence="1" type="primary">uppP</name>
    <name type="ordered locus">NT01CX_0158</name>
</gene>
<name>UPPP_CLONN</name>
<proteinExistence type="inferred from homology"/>
<dbReference type="EC" id="3.6.1.27" evidence="1"/>
<dbReference type="EMBL" id="CP000382">
    <property type="protein sequence ID" value="ABK61243.1"/>
    <property type="molecule type" value="Genomic_DNA"/>
</dbReference>
<dbReference type="RefSeq" id="WP_011722650.1">
    <property type="nucleotide sequence ID" value="NC_008593.1"/>
</dbReference>
<dbReference type="SMR" id="A0Q210"/>
<dbReference type="STRING" id="386415.NT01CX_0158"/>
<dbReference type="KEGG" id="cno:NT01CX_0158"/>
<dbReference type="eggNOG" id="COG1968">
    <property type="taxonomic scope" value="Bacteria"/>
</dbReference>
<dbReference type="HOGENOM" id="CLU_060296_2_0_9"/>
<dbReference type="Proteomes" id="UP000008220">
    <property type="component" value="Chromosome"/>
</dbReference>
<dbReference type="GO" id="GO:0005886">
    <property type="term" value="C:plasma membrane"/>
    <property type="evidence" value="ECO:0007669"/>
    <property type="project" value="UniProtKB-SubCell"/>
</dbReference>
<dbReference type="GO" id="GO:0050380">
    <property type="term" value="F:undecaprenyl-diphosphatase activity"/>
    <property type="evidence" value="ECO:0007669"/>
    <property type="project" value="UniProtKB-UniRule"/>
</dbReference>
<dbReference type="GO" id="GO:0071555">
    <property type="term" value="P:cell wall organization"/>
    <property type="evidence" value="ECO:0007669"/>
    <property type="project" value="UniProtKB-KW"/>
</dbReference>
<dbReference type="GO" id="GO:0009252">
    <property type="term" value="P:peptidoglycan biosynthetic process"/>
    <property type="evidence" value="ECO:0007669"/>
    <property type="project" value="UniProtKB-KW"/>
</dbReference>
<dbReference type="GO" id="GO:0008360">
    <property type="term" value="P:regulation of cell shape"/>
    <property type="evidence" value="ECO:0007669"/>
    <property type="project" value="UniProtKB-KW"/>
</dbReference>
<dbReference type="GO" id="GO:0046677">
    <property type="term" value="P:response to antibiotic"/>
    <property type="evidence" value="ECO:0007669"/>
    <property type="project" value="UniProtKB-UniRule"/>
</dbReference>
<dbReference type="HAMAP" id="MF_01006">
    <property type="entry name" value="Undec_diphosphatase"/>
    <property type="match status" value="1"/>
</dbReference>
<dbReference type="InterPro" id="IPR003824">
    <property type="entry name" value="UppP"/>
</dbReference>
<dbReference type="NCBIfam" id="NF001389">
    <property type="entry name" value="PRK00281.1-2"/>
    <property type="match status" value="1"/>
</dbReference>
<dbReference type="NCBIfam" id="NF001390">
    <property type="entry name" value="PRK00281.1-4"/>
    <property type="match status" value="1"/>
</dbReference>
<dbReference type="NCBIfam" id="TIGR00753">
    <property type="entry name" value="undec_PP_bacA"/>
    <property type="match status" value="1"/>
</dbReference>
<dbReference type="PANTHER" id="PTHR30622">
    <property type="entry name" value="UNDECAPRENYL-DIPHOSPHATASE"/>
    <property type="match status" value="1"/>
</dbReference>
<dbReference type="PANTHER" id="PTHR30622:SF3">
    <property type="entry name" value="UNDECAPRENYL-DIPHOSPHATASE"/>
    <property type="match status" value="1"/>
</dbReference>
<dbReference type="Pfam" id="PF02673">
    <property type="entry name" value="BacA"/>
    <property type="match status" value="1"/>
</dbReference>
<comment type="function">
    <text evidence="1">Catalyzes the dephosphorylation of undecaprenyl diphosphate (UPP). Confers resistance to bacitracin.</text>
</comment>
<comment type="catalytic activity">
    <reaction evidence="1">
        <text>di-trans,octa-cis-undecaprenyl diphosphate + H2O = di-trans,octa-cis-undecaprenyl phosphate + phosphate + H(+)</text>
        <dbReference type="Rhea" id="RHEA:28094"/>
        <dbReference type="ChEBI" id="CHEBI:15377"/>
        <dbReference type="ChEBI" id="CHEBI:15378"/>
        <dbReference type="ChEBI" id="CHEBI:43474"/>
        <dbReference type="ChEBI" id="CHEBI:58405"/>
        <dbReference type="ChEBI" id="CHEBI:60392"/>
        <dbReference type="EC" id="3.6.1.27"/>
    </reaction>
</comment>
<comment type="subcellular location">
    <subcellularLocation>
        <location evidence="1">Cell membrane</location>
        <topology evidence="1">Multi-pass membrane protein</topology>
    </subcellularLocation>
</comment>
<comment type="miscellaneous">
    <text>Bacitracin is thought to be involved in the inhibition of peptidoglycan synthesis by sequestering undecaprenyl diphosphate, thereby reducing the pool of lipid carrier available.</text>
</comment>
<comment type="similarity">
    <text evidence="1">Belongs to the UppP family.</text>
</comment>
<evidence type="ECO:0000255" key="1">
    <source>
        <dbReference type="HAMAP-Rule" id="MF_01006"/>
    </source>
</evidence>
<sequence>MENLWFIIKAIIIGIVEGITEFLPVSSTGHMIIVEDLINFKEGVMPASLYTKQYIDAFTMIIQLGAILAIVVLYWDKIKRSFENFAPSKPKSGFKFWLNIAVSAVPAGVLGLKFHSKINEKLFNPGSVTAALIVGAIWMIFAEKRYRGKFTTKDIDNVTIKQAFIIGCFQCLALWPGMSRSASTIIGAWIVGLSTVAAAEFSFFLALPVMAGVTYKSLKDINVFALGSMHIVGLTVGFIVSFIVALIVVDKFITFLKKKPMRVFAMYRILLGIVLIILSLFNVISM</sequence>
<keyword id="KW-0046">Antibiotic resistance</keyword>
<keyword id="KW-1003">Cell membrane</keyword>
<keyword id="KW-0133">Cell shape</keyword>
<keyword id="KW-0961">Cell wall biogenesis/degradation</keyword>
<keyword id="KW-0378">Hydrolase</keyword>
<keyword id="KW-0472">Membrane</keyword>
<keyword id="KW-0573">Peptidoglycan synthesis</keyword>
<keyword id="KW-1185">Reference proteome</keyword>
<keyword id="KW-0812">Transmembrane</keyword>
<keyword id="KW-1133">Transmembrane helix</keyword>
<protein>
    <recommendedName>
        <fullName evidence="1">Undecaprenyl-diphosphatase</fullName>
        <ecNumber evidence="1">3.6.1.27</ecNumber>
    </recommendedName>
    <alternativeName>
        <fullName evidence="1">Bacitracin resistance protein</fullName>
    </alternativeName>
    <alternativeName>
        <fullName evidence="1">Undecaprenyl pyrophosphate phosphatase</fullName>
    </alternativeName>
</protein>
<reference key="1">
    <citation type="journal article" date="2006" name="Nat. Biotechnol.">
        <title>The genome and transcriptomes of the anti-tumor agent Clostridium novyi-NT.</title>
        <authorList>
            <person name="Bettegowda C."/>
            <person name="Huang X."/>
            <person name="Lin J."/>
            <person name="Cheong I."/>
            <person name="Kohli M."/>
            <person name="Szabo S.A."/>
            <person name="Zhang X."/>
            <person name="Diaz L.A. Jr."/>
            <person name="Velculescu V.E."/>
            <person name="Parmigiani G."/>
            <person name="Kinzler K.W."/>
            <person name="Vogelstein B."/>
            <person name="Zhou S."/>
        </authorList>
    </citation>
    <scope>NUCLEOTIDE SEQUENCE [LARGE SCALE GENOMIC DNA]</scope>
    <source>
        <strain>NT</strain>
    </source>
</reference>
<feature type="chain" id="PRO_0000290700" description="Undecaprenyl-diphosphatase">
    <location>
        <begin position="1"/>
        <end position="286"/>
    </location>
</feature>
<feature type="transmembrane region" description="Helical" evidence="1">
    <location>
        <begin position="5"/>
        <end position="25"/>
    </location>
</feature>
<feature type="transmembrane region" description="Helical" evidence="1">
    <location>
        <begin position="55"/>
        <end position="75"/>
    </location>
</feature>
<feature type="transmembrane region" description="Helical" evidence="1">
    <location>
        <begin position="92"/>
        <end position="112"/>
    </location>
</feature>
<feature type="transmembrane region" description="Helical" evidence="1">
    <location>
        <begin position="122"/>
        <end position="142"/>
    </location>
</feature>
<feature type="transmembrane region" description="Helical" evidence="1">
    <location>
        <begin position="185"/>
        <end position="205"/>
    </location>
</feature>
<feature type="transmembrane region" description="Helical" evidence="1">
    <location>
        <begin position="229"/>
        <end position="249"/>
    </location>
</feature>
<feature type="transmembrane region" description="Helical" evidence="1">
    <location>
        <begin position="264"/>
        <end position="284"/>
    </location>
</feature>